<accession>Q1ACP0</accession>
<keyword id="KW-0150">Chloroplast</keyword>
<keyword id="KW-0472">Membrane</keyword>
<keyword id="KW-0602">Photosynthesis</keyword>
<keyword id="KW-0604">Photosystem II</keyword>
<keyword id="KW-0934">Plastid</keyword>
<keyword id="KW-0674">Reaction center</keyword>
<keyword id="KW-0793">Thylakoid</keyword>
<keyword id="KW-0812">Transmembrane</keyword>
<keyword id="KW-1133">Transmembrane helix</keyword>
<comment type="function">
    <text evidence="1">One of the components of the core complex of photosystem II (PSII). PSII is a light-driven water:plastoquinone oxidoreductase that uses light energy to abstract electrons from H(2)O, generating O(2) and a proton gradient subsequently used for ATP formation. It consists of a core antenna complex that captures photons, and an electron transfer chain that converts photonic excitation into a charge separation. This subunit is found at the monomer-monomer interface.</text>
</comment>
<comment type="subunit">
    <text evidence="1">PSII is composed of 1 copy each of membrane proteins PsbA, PsbB, PsbC, PsbD, PsbE, PsbF, PsbH, PsbI, PsbJ, PsbK, PsbL, PsbM, PsbT, PsbX, PsbY, PsbZ, Psb30/Ycf12, at least 3 peripheral proteins of the oxygen-evolving complex and a large number of cofactors. It forms dimeric complexes.</text>
</comment>
<comment type="subcellular location">
    <subcellularLocation>
        <location evidence="1">Plastid</location>
        <location evidence="1">Chloroplast thylakoid membrane</location>
        <topology evidence="1">Single-pass membrane protein</topology>
    </subcellularLocation>
</comment>
<comment type="similarity">
    <text evidence="1">Belongs to the PsbM family.</text>
</comment>
<protein>
    <recommendedName>
        <fullName evidence="1">Photosystem II reaction center protein M</fullName>
        <shortName evidence="1">PSII-M</shortName>
    </recommendedName>
</protein>
<organism>
    <name type="scientific">Chara vulgaris</name>
    <name type="common">Common stonewort</name>
    <dbReference type="NCBI Taxonomy" id="55564"/>
    <lineage>
        <taxon>Eukaryota</taxon>
        <taxon>Viridiplantae</taxon>
        <taxon>Streptophyta</taxon>
        <taxon>Charophyceae</taxon>
        <taxon>Charales</taxon>
        <taxon>Characeae</taxon>
        <taxon>Chara</taxon>
    </lineage>
</organism>
<evidence type="ECO:0000255" key="1">
    <source>
        <dbReference type="HAMAP-Rule" id="MF_00438"/>
    </source>
</evidence>
<gene>
    <name evidence="1" type="primary">psbM</name>
</gene>
<feature type="chain" id="PRO_0000276232" description="Photosystem II reaction center protein M">
    <location>
        <begin position="1"/>
        <end position="35"/>
    </location>
</feature>
<feature type="transmembrane region" description="Helical" evidence="1">
    <location>
        <begin position="5"/>
        <end position="25"/>
    </location>
</feature>
<reference key="1">
    <citation type="journal article" date="2006" name="Mol. Biol. Evol.">
        <title>The chloroplast genome sequence of Chara vulgaris sheds new light into the closest green algal relatives of land plants.</title>
        <authorList>
            <person name="Turmel M."/>
            <person name="Otis C."/>
            <person name="Lemieux C."/>
        </authorList>
    </citation>
    <scope>NUCLEOTIDE SEQUENCE [LARGE SCALE GENOMIC DNA]</scope>
</reference>
<dbReference type="EMBL" id="DQ229107">
    <property type="protein sequence ID" value="ABA61956.1"/>
    <property type="molecule type" value="Genomic_DNA"/>
</dbReference>
<dbReference type="RefSeq" id="YP_635707.1">
    <property type="nucleotide sequence ID" value="NC_008097.1"/>
</dbReference>
<dbReference type="SMR" id="Q1ACP0"/>
<dbReference type="GeneID" id="4100322"/>
<dbReference type="GO" id="GO:0009535">
    <property type="term" value="C:chloroplast thylakoid membrane"/>
    <property type="evidence" value="ECO:0007669"/>
    <property type="project" value="UniProtKB-SubCell"/>
</dbReference>
<dbReference type="GO" id="GO:0009523">
    <property type="term" value="C:photosystem II"/>
    <property type="evidence" value="ECO:0007669"/>
    <property type="project" value="UniProtKB-KW"/>
</dbReference>
<dbReference type="GO" id="GO:0019684">
    <property type="term" value="P:photosynthesis, light reaction"/>
    <property type="evidence" value="ECO:0007669"/>
    <property type="project" value="InterPro"/>
</dbReference>
<dbReference type="HAMAP" id="MF_00438">
    <property type="entry name" value="PSII_PsbM"/>
    <property type="match status" value="1"/>
</dbReference>
<dbReference type="InterPro" id="IPR007826">
    <property type="entry name" value="PSII_PsbM"/>
</dbReference>
<dbReference type="InterPro" id="IPR037269">
    <property type="entry name" value="PSII_PsbM_sf"/>
</dbReference>
<dbReference type="NCBIfam" id="TIGR03038">
    <property type="entry name" value="PS_II_psbM"/>
    <property type="match status" value="1"/>
</dbReference>
<dbReference type="PANTHER" id="PTHR35774">
    <property type="entry name" value="PHOTOSYSTEM II REACTION CENTER PROTEIN M"/>
    <property type="match status" value="1"/>
</dbReference>
<dbReference type="PANTHER" id="PTHR35774:SF1">
    <property type="entry name" value="PHOTOSYSTEM II REACTION CENTER PROTEIN M"/>
    <property type="match status" value="1"/>
</dbReference>
<dbReference type="Pfam" id="PF05151">
    <property type="entry name" value="PsbM"/>
    <property type="match status" value="1"/>
</dbReference>
<dbReference type="SUPFAM" id="SSF161033">
    <property type="entry name" value="Photosystem II reaction center protein M, PsbM"/>
    <property type="match status" value="1"/>
</dbReference>
<name>PSBM_CHAVU</name>
<geneLocation type="chloroplast"/>
<proteinExistence type="inferred from homology"/>
<sequence>MEVNILAFIATALFIIIPTAFLLILYVKTASQSDS</sequence>